<organism>
    <name type="scientific">Lilium longiflorum</name>
    <name type="common">Trumpet lily</name>
    <dbReference type="NCBI Taxonomy" id="4690"/>
    <lineage>
        <taxon>Eukaryota</taxon>
        <taxon>Viridiplantae</taxon>
        <taxon>Streptophyta</taxon>
        <taxon>Embryophyta</taxon>
        <taxon>Tracheophyta</taxon>
        <taxon>Spermatophyta</taxon>
        <taxon>Magnoliopsida</taxon>
        <taxon>Liliopsida</taxon>
        <taxon>Liliales</taxon>
        <taxon>Liliaceae</taxon>
        <taxon>Lilium</taxon>
    </lineage>
</organism>
<feature type="chain" id="PRO_0000214931" description="Actin-depolymerizing factor">
    <location>
        <begin position="1"/>
        <end position="139"/>
    </location>
</feature>
<feature type="domain" description="ADF-H" evidence="2">
    <location>
        <begin position="5"/>
        <end position="139"/>
    </location>
</feature>
<dbReference type="EMBL" id="Z14110">
    <property type="protein sequence ID" value="CAA78483.1"/>
    <property type="molecule type" value="mRNA"/>
</dbReference>
<dbReference type="PIR" id="S30935">
    <property type="entry name" value="S30935"/>
</dbReference>
<dbReference type="SMR" id="P30175"/>
<dbReference type="GO" id="GO:0015629">
    <property type="term" value="C:actin cytoskeleton"/>
    <property type="evidence" value="ECO:0007669"/>
    <property type="project" value="InterPro"/>
</dbReference>
<dbReference type="GO" id="GO:0003779">
    <property type="term" value="F:actin binding"/>
    <property type="evidence" value="ECO:0007669"/>
    <property type="project" value="UniProtKB-KW"/>
</dbReference>
<dbReference type="GO" id="GO:0030042">
    <property type="term" value="P:actin filament depolymerization"/>
    <property type="evidence" value="ECO:0007669"/>
    <property type="project" value="InterPro"/>
</dbReference>
<dbReference type="CDD" id="cd11286">
    <property type="entry name" value="ADF_cofilin_like"/>
    <property type="match status" value="1"/>
</dbReference>
<dbReference type="FunFam" id="3.40.20.10:FF:000025">
    <property type="entry name" value="Actin-depolymerizing factor 2"/>
    <property type="match status" value="1"/>
</dbReference>
<dbReference type="Gene3D" id="3.40.20.10">
    <property type="entry name" value="Severin"/>
    <property type="match status" value="1"/>
</dbReference>
<dbReference type="InterPro" id="IPR002108">
    <property type="entry name" value="ADF-H"/>
</dbReference>
<dbReference type="InterPro" id="IPR029006">
    <property type="entry name" value="ADF-H/Gelsolin-like_dom_sf"/>
</dbReference>
<dbReference type="InterPro" id="IPR017904">
    <property type="entry name" value="ADF/Cofilin"/>
</dbReference>
<dbReference type="PANTHER" id="PTHR11913">
    <property type="entry name" value="COFILIN-RELATED"/>
    <property type="match status" value="1"/>
</dbReference>
<dbReference type="Pfam" id="PF00241">
    <property type="entry name" value="Cofilin_ADF"/>
    <property type="match status" value="1"/>
</dbReference>
<dbReference type="SMART" id="SM00102">
    <property type="entry name" value="ADF"/>
    <property type="match status" value="1"/>
</dbReference>
<dbReference type="SUPFAM" id="SSF55753">
    <property type="entry name" value="Actin depolymerizing proteins"/>
    <property type="match status" value="1"/>
</dbReference>
<dbReference type="PROSITE" id="PS51263">
    <property type="entry name" value="ADF_H"/>
    <property type="match status" value="1"/>
</dbReference>
<accession>P30175</accession>
<name>ADF_LILLO</name>
<evidence type="ECO:0000250" key="1"/>
<evidence type="ECO:0000255" key="2">
    <source>
        <dbReference type="PROSITE-ProRule" id="PRU00599"/>
    </source>
</evidence>
<evidence type="ECO:0000305" key="3"/>
<sequence>MANSSSGMAVDDECKLKFMELKAKRNFRFIVFKIEEKVQQVTVERLGQPNESYDDFTECLPPNECRYAVFDFDFVTDENCQKSKIFFISWSPDTSRVRSKMLYASTKDRFKRELDGIQVELQATDPSEMSMDIIKARAF</sequence>
<reference key="1">
    <citation type="journal article" date="1993" name="Plant Mol. Biol.">
        <title>Molecular cloning and characterization of anther-preferential cDNA encoding a putative actin-depolymerizing factor.</title>
        <authorList>
            <person name="Kim S.-R."/>
            <person name="Kim Y."/>
            <person name="An G."/>
        </authorList>
    </citation>
    <scope>NUCLEOTIDE SEQUENCE [MRNA]</scope>
    <source>
        <strain>cv. Nellie white</strain>
        <tissue>Pollen</tissue>
    </source>
</reference>
<protein>
    <recommendedName>
        <fullName>Actin-depolymerizing factor</fullName>
        <shortName>ADF</shortName>
    </recommendedName>
</protein>
<comment type="function">
    <text evidence="1">Actin-depolymerizing protein. Severs actin filaments (F-actin) and binds to actin monomers (By similarity).</text>
</comment>
<comment type="tissue specificity">
    <text>Preferentially in mature anther.</text>
</comment>
<comment type="similarity">
    <text evidence="3">Belongs to the actin-binding proteins ADF family.</text>
</comment>
<proteinExistence type="evidence at transcript level"/>
<keyword id="KW-0009">Actin-binding</keyword>